<protein>
    <recommendedName>
        <fullName evidence="1">Chaperone protein DnaJ</fullName>
    </recommendedName>
</protein>
<feature type="chain" id="PRO_1000137677" description="Chaperone protein DnaJ">
    <location>
        <begin position="1"/>
        <end position="375"/>
    </location>
</feature>
<feature type="domain" description="J" evidence="1">
    <location>
        <begin position="4"/>
        <end position="68"/>
    </location>
</feature>
<feature type="repeat" description="CXXCXGXG motif">
    <location>
        <begin position="147"/>
        <end position="154"/>
    </location>
</feature>
<feature type="repeat" description="CXXCXGXG motif">
    <location>
        <begin position="164"/>
        <end position="171"/>
    </location>
</feature>
<feature type="repeat" description="CXXCXGXG motif">
    <location>
        <begin position="190"/>
        <end position="197"/>
    </location>
</feature>
<feature type="repeat" description="CXXCXGXG motif">
    <location>
        <begin position="204"/>
        <end position="211"/>
    </location>
</feature>
<feature type="zinc finger region" description="CR-type" evidence="1">
    <location>
        <begin position="134"/>
        <end position="216"/>
    </location>
</feature>
<feature type="binding site" evidence="1">
    <location>
        <position position="147"/>
    </location>
    <ligand>
        <name>Zn(2+)</name>
        <dbReference type="ChEBI" id="CHEBI:29105"/>
        <label>1</label>
    </ligand>
</feature>
<feature type="binding site" evidence="1">
    <location>
        <position position="150"/>
    </location>
    <ligand>
        <name>Zn(2+)</name>
        <dbReference type="ChEBI" id="CHEBI:29105"/>
        <label>1</label>
    </ligand>
</feature>
<feature type="binding site" evidence="1">
    <location>
        <position position="164"/>
    </location>
    <ligand>
        <name>Zn(2+)</name>
        <dbReference type="ChEBI" id="CHEBI:29105"/>
        <label>2</label>
    </ligand>
</feature>
<feature type="binding site" evidence="1">
    <location>
        <position position="167"/>
    </location>
    <ligand>
        <name>Zn(2+)</name>
        <dbReference type="ChEBI" id="CHEBI:29105"/>
        <label>2</label>
    </ligand>
</feature>
<feature type="binding site" evidence="1">
    <location>
        <position position="190"/>
    </location>
    <ligand>
        <name>Zn(2+)</name>
        <dbReference type="ChEBI" id="CHEBI:29105"/>
        <label>2</label>
    </ligand>
</feature>
<feature type="binding site" evidence="1">
    <location>
        <position position="193"/>
    </location>
    <ligand>
        <name>Zn(2+)</name>
        <dbReference type="ChEBI" id="CHEBI:29105"/>
        <label>2</label>
    </ligand>
</feature>
<feature type="binding site" evidence="1">
    <location>
        <position position="204"/>
    </location>
    <ligand>
        <name>Zn(2+)</name>
        <dbReference type="ChEBI" id="CHEBI:29105"/>
        <label>1</label>
    </ligand>
</feature>
<feature type="binding site" evidence="1">
    <location>
        <position position="207"/>
    </location>
    <ligand>
        <name>Zn(2+)</name>
        <dbReference type="ChEBI" id="CHEBI:29105"/>
        <label>1</label>
    </ligand>
</feature>
<reference key="1">
    <citation type="journal article" date="2011" name="MBio">
        <title>Novel metabolic attributes of the genus Cyanothece, comprising a group of unicellular nitrogen-fixing Cyanobacteria.</title>
        <authorList>
            <person name="Bandyopadhyay A."/>
            <person name="Elvitigala T."/>
            <person name="Welsh E."/>
            <person name="Stockel J."/>
            <person name="Liberton M."/>
            <person name="Min H."/>
            <person name="Sherman L.A."/>
            <person name="Pakrasi H.B."/>
        </authorList>
    </citation>
    <scope>NUCLEOTIDE SEQUENCE [LARGE SCALE GENOMIC DNA]</scope>
    <source>
        <strain>PCC 8801 / RF-1</strain>
    </source>
</reference>
<evidence type="ECO:0000255" key="1">
    <source>
        <dbReference type="HAMAP-Rule" id="MF_01152"/>
    </source>
</evidence>
<gene>
    <name evidence="1" type="primary">dnaJ</name>
    <name type="ordered locus">PCC8801_3191</name>
</gene>
<comment type="function">
    <text evidence="1">Participates actively in the response to hyperosmotic and heat shock by preventing the aggregation of stress-denatured proteins and by disaggregating proteins, also in an autonomous, DnaK-independent fashion. Unfolded proteins bind initially to DnaJ; upon interaction with the DnaJ-bound protein, DnaK hydrolyzes its bound ATP, resulting in the formation of a stable complex. GrpE releases ADP from DnaK; ATP binding to DnaK triggers the release of the substrate protein, thus completing the reaction cycle. Several rounds of ATP-dependent interactions between DnaJ, DnaK and GrpE are required for fully efficient folding. Also involved, together with DnaK and GrpE, in the DNA replication of plasmids through activation of initiation proteins.</text>
</comment>
<comment type="cofactor">
    <cofactor evidence="1">
        <name>Zn(2+)</name>
        <dbReference type="ChEBI" id="CHEBI:29105"/>
    </cofactor>
    <text evidence="1">Binds 2 Zn(2+) ions per monomer.</text>
</comment>
<comment type="subunit">
    <text evidence="1">Homodimer.</text>
</comment>
<comment type="subcellular location">
    <subcellularLocation>
        <location evidence="1">Cytoplasm</location>
    </subcellularLocation>
</comment>
<comment type="domain">
    <text evidence="1">The J domain is necessary and sufficient to stimulate DnaK ATPase activity. Zinc center 1 plays an important role in the autonomous, DnaK-independent chaperone activity of DnaJ. Zinc center 2 is essential for interaction with DnaK and for DnaJ activity.</text>
</comment>
<comment type="similarity">
    <text evidence="1">Belongs to the DnaJ family.</text>
</comment>
<accession>B7JY68</accession>
<proteinExistence type="inferred from homology"/>
<name>DNAJ_RIPO1</name>
<keyword id="KW-0143">Chaperone</keyword>
<keyword id="KW-0963">Cytoplasm</keyword>
<keyword id="KW-0235">DNA replication</keyword>
<keyword id="KW-0479">Metal-binding</keyword>
<keyword id="KW-1185">Reference proteome</keyword>
<keyword id="KW-0677">Repeat</keyword>
<keyword id="KW-0346">Stress response</keyword>
<keyword id="KW-0862">Zinc</keyword>
<keyword id="KW-0863">Zinc-finger</keyword>
<sequence>MSGDYYETLGVDRNASKEDIKRAYRRLARKYHPDINKEAGAEDRFKEINRAYEVLSEPETRARYDQFGEAGVSGAGAAGFDYGDMGGFADIFETIFSGFGGGVGTGSTRRRTGPTRGDDLRLDLKLDFREAIFGGEKEIRIPHLETCQVCNGSGAKPGTGSRTCSTCNGAGQVRRATRTPFGSFAQVSTCPDCNGAGQVIEQKCDACGGAGRKQETKKLKITIPAGVDNGTRLRVGKEGDAGTRGGTPGDLYVYLFVEPDKEFTREGMNIHSEITISYLQAILGCKLQINTVDGPQELVIPAGTQPNTELMLEDHGVPKLGNSAIRGDHLINVKIAIPTRINNEERELLEKLAHIKGQSHGKGGLEGFLGSLFHK</sequence>
<organism>
    <name type="scientific">Rippkaea orientalis (strain PCC 8801 / RF-1)</name>
    <name type="common">Cyanothece sp. (strain PCC 8801)</name>
    <dbReference type="NCBI Taxonomy" id="41431"/>
    <lineage>
        <taxon>Bacteria</taxon>
        <taxon>Bacillati</taxon>
        <taxon>Cyanobacteriota</taxon>
        <taxon>Cyanophyceae</taxon>
        <taxon>Oscillatoriophycideae</taxon>
        <taxon>Chroococcales</taxon>
        <taxon>Aphanothecaceae</taxon>
        <taxon>Rippkaea</taxon>
        <taxon>Rippkaea orientalis</taxon>
    </lineage>
</organism>
<dbReference type="EMBL" id="CP001287">
    <property type="protein sequence ID" value="ACK67170.1"/>
    <property type="molecule type" value="Genomic_DNA"/>
</dbReference>
<dbReference type="RefSeq" id="WP_012596431.1">
    <property type="nucleotide sequence ID" value="NC_011726.1"/>
</dbReference>
<dbReference type="SMR" id="B7JY68"/>
<dbReference type="STRING" id="41431.PCC8801_3191"/>
<dbReference type="KEGG" id="cyp:PCC8801_3191"/>
<dbReference type="eggNOG" id="COG0484">
    <property type="taxonomic scope" value="Bacteria"/>
</dbReference>
<dbReference type="HOGENOM" id="CLU_017633_0_7_3"/>
<dbReference type="OrthoDB" id="9779889at2"/>
<dbReference type="Proteomes" id="UP000008204">
    <property type="component" value="Chromosome"/>
</dbReference>
<dbReference type="GO" id="GO:0005737">
    <property type="term" value="C:cytoplasm"/>
    <property type="evidence" value="ECO:0007669"/>
    <property type="project" value="UniProtKB-SubCell"/>
</dbReference>
<dbReference type="GO" id="GO:0005524">
    <property type="term" value="F:ATP binding"/>
    <property type="evidence" value="ECO:0007669"/>
    <property type="project" value="InterPro"/>
</dbReference>
<dbReference type="GO" id="GO:0031072">
    <property type="term" value="F:heat shock protein binding"/>
    <property type="evidence" value="ECO:0007669"/>
    <property type="project" value="InterPro"/>
</dbReference>
<dbReference type="GO" id="GO:0051082">
    <property type="term" value="F:unfolded protein binding"/>
    <property type="evidence" value="ECO:0007669"/>
    <property type="project" value="UniProtKB-UniRule"/>
</dbReference>
<dbReference type="GO" id="GO:0008270">
    <property type="term" value="F:zinc ion binding"/>
    <property type="evidence" value="ECO:0007669"/>
    <property type="project" value="UniProtKB-UniRule"/>
</dbReference>
<dbReference type="GO" id="GO:0051085">
    <property type="term" value="P:chaperone cofactor-dependent protein refolding"/>
    <property type="evidence" value="ECO:0007669"/>
    <property type="project" value="TreeGrafter"/>
</dbReference>
<dbReference type="GO" id="GO:0006260">
    <property type="term" value="P:DNA replication"/>
    <property type="evidence" value="ECO:0007669"/>
    <property type="project" value="UniProtKB-KW"/>
</dbReference>
<dbReference type="GO" id="GO:0042026">
    <property type="term" value="P:protein refolding"/>
    <property type="evidence" value="ECO:0007669"/>
    <property type="project" value="TreeGrafter"/>
</dbReference>
<dbReference type="GO" id="GO:0009408">
    <property type="term" value="P:response to heat"/>
    <property type="evidence" value="ECO:0007669"/>
    <property type="project" value="InterPro"/>
</dbReference>
<dbReference type="CDD" id="cd06257">
    <property type="entry name" value="DnaJ"/>
    <property type="match status" value="1"/>
</dbReference>
<dbReference type="CDD" id="cd10747">
    <property type="entry name" value="DnaJ_C"/>
    <property type="match status" value="1"/>
</dbReference>
<dbReference type="CDD" id="cd10719">
    <property type="entry name" value="DnaJ_zf"/>
    <property type="match status" value="1"/>
</dbReference>
<dbReference type="FunFam" id="2.60.260.20:FF:000005">
    <property type="entry name" value="Chaperone protein dnaJ 1, mitochondrial"/>
    <property type="match status" value="1"/>
</dbReference>
<dbReference type="FunFam" id="2.10.230.10:FF:000002">
    <property type="entry name" value="Molecular chaperone DnaJ"/>
    <property type="match status" value="1"/>
</dbReference>
<dbReference type="Gene3D" id="1.10.287.110">
    <property type="entry name" value="DnaJ domain"/>
    <property type="match status" value="1"/>
</dbReference>
<dbReference type="Gene3D" id="2.10.230.10">
    <property type="entry name" value="Heat shock protein DnaJ, cysteine-rich domain"/>
    <property type="match status" value="1"/>
</dbReference>
<dbReference type="Gene3D" id="2.60.260.20">
    <property type="entry name" value="Urease metallochaperone UreE, N-terminal domain"/>
    <property type="match status" value="2"/>
</dbReference>
<dbReference type="HAMAP" id="MF_01152">
    <property type="entry name" value="DnaJ"/>
    <property type="match status" value="1"/>
</dbReference>
<dbReference type="InterPro" id="IPR012724">
    <property type="entry name" value="DnaJ"/>
</dbReference>
<dbReference type="InterPro" id="IPR002939">
    <property type="entry name" value="DnaJ_C"/>
</dbReference>
<dbReference type="InterPro" id="IPR001623">
    <property type="entry name" value="DnaJ_domain"/>
</dbReference>
<dbReference type="InterPro" id="IPR008971">
    <property type="entry name" value="HSP40/DnaJ_pept-bd"/>
</dbReference>
<dbReference type="InterPro" id="IPR001305">
    <property type="entry name" value="HSP_DnaJ_Cys-rich_dom"/>
</dbReference>
<dbReference type="InterPro" id="IPR036410">
    <property type="entry name" value="HSP_DnaJ_Cys-rich_dom_sf"/>
</dbReference>
<dbReference type="InterPro" id="IPR036869">
    <property type="entry name" value="J_dom_sf"/>
</dbReference>
<dbReference type="NCBIfam" id="TIGR02349">
    <property type="entry name" value="DnaJ_bact"/>
    <property type="match status" value="1"/>
</dbReference>
<dbReference type="NCBIfam" id="NF008035">
    <property type="entry name" value="PRK10767.1"/>
    <property type="match status" value="1"/>
</dbReference>
<dbReference type="NCBIfam" id="NF010886">
    <property type="entry name" value="PRK14293.1"/>
    <property type="match status" value="1"/>
</dbReference>
<dbReference type="PANTHER" id="PTHR43096:SF10">
    <property type="entry name" value="CHAPERONE PROTEIN DNAJ A6, CHLOROPLASTIC"/>
    <property type="match status" value="1"/>
</dbReference>
<dbReference type="PANTHER" id="PTHR43096">
    <property type="entry name" value="DNAJ HOMOLOG 1, MITOCHONDRIAL-RELATED"/>
    <property type="match status" value="1"/>
</dbReference>
<dbReference type="Pfam" id="PF00226">
    <property type="entry name" value="DnaJ"/>
    <property type="match status" value="1"/>
</dbReference>
<dbReference type="Pfam" id="PF01556">
    <property type="entry name" value="DnaJ_C"/>
    <property type="match status" value="1"/>
</dbReference>
<dbReference type="Pfam" id="PF00684">
    <property type="entry name" value="DnaJ_CXXCXGXG"/>
    <property type="match status" value="1"/>
</dbReference>
<dbReference type="PRINTS" id="PR00625">
    <property type="entry name" value="JDOMAIN"/>
</dbReference>
<dbReference type="SMART" id="SM00271">
    <property type="entry name" value="DnaJ"/>
    <property type="match status" value="1"/>
</dbReference>
<dbReference type="SUPFAM" id="SSF46565">
    <property type="entry name" value="Chaperone J-domain"/>
    <property type="match status" value="1"/>
</dbReference>
<dbReference type="SUPFAM" id="SSF57938">
    <property type="entry name" value="DnaJ/Hsp40 cysteine-rich domain"/>
    <property type="match status" value="1"/>
</dbReference>
<dbReference type="SUPFAM" id="SSF49493">
    <property type="entry name" value="HSP40/DnaJ peptide-binding domain"/>
    <property type="match status" value="2"/>
</dbReference>
<dbReference type="PROSITE" id="PS50076">
    <property type="entry name" value="DNAJ_2"/>
    <property type="match status" value="1"/>
</dbReference>
<dbReference type="PROSITE" id="PS51188">
    <property type="entry name" value="ZF_CR"/>
    <property type="match status" value="1"/>
</dbReference>